<dbReference type="EC" id="2.5.1.41" evidence="1"/>
<dbReference type="EMBL" id="AE017261">
    <property type="protein sequence ID" value="AAT42768.1"/>
    <property type="molecule type" value="Genomic_DNA"/>
</dbReference>
<dbReference type="RefSeq" id="WP_011176984.1">
    <property type="nucleotide sequence ID" value="NC_005877.1"/>
</dbReference>
<dbReference type="SMR" id="Q6L2N4"/>
<dbReference type="STRING" id="263820.PTO0183"/>
<dbReference type="PaxDb" id="263820-PTO0183"/>
<dbReference type="GeneID" id="2845033"/>
<dbReference type="KEGG" id="pto:PTO0183"/>
<dbReference type="PATRIC" id="fig|263820.9.peg.201"/>
<dbReference type="eggNOG" id="arCOG01085">
    <property type="taxonomic scope" value="Archaea"/>
</dbReference>
<dbReference type="HOGENOM" id="CLU_068610_0_0_2"/>
<dbReference type="InParanoid" id="Q6L2N4"/>
<dbReference type="OrthoDB" id="7409at2157"/>
<dbReference type="UniPathway" id="UPA00940"/>
<dbReference type="Proteomes" id="UP000000438">
    <property type="component" value="Chromosome"/>
</dbReference>
<dbReference type="GO" id="GO:0005737">
    <property type="term" value="C:cytoplasm"/>
    <property type="evidence" value="ECO:0007669"/>
    <property type="project" value="UniProtKB-SubCell"/>
</dbReference>
<dbReference type="GO" id="GO:0000287">
    <property type="term" value="F:magnesium ion binding"/>
    <property type="evidence" value="ECO:0007669"/>
    <property type="project" value="UniProtKB-UniRule"/>
</dbReference>
<dbReference type="GO" id="GO:0047294">
    <property type="term" value="F:phosphoglycerol geranylgeranyltransferase activity"/>
    <property type="evidence" value="ECO:0007669"/>
    <property type="project" value="UniProtKB-UniRule"/>
</dbReference>
<dbReference type="GO" id="GO:0046474">
    <property type="term" value="P:glycerophospholipid biosynthetic process"/>
    <property type="evidence" value="ECO:0007669"/>
    <property type="project" value="UniProtKB-UniRule"/>
</dbReference>
<dbReference type="CDD" id="cd02812">
    <property type="entry name" value="PcrB_like"/>
    <property type="match status" value="1"/>
</dbReference>
<dbReference type="Gene3D" id="3.20.20.390">
    <property type="entry name" value="FMN-linked oxidoreductases"/>
    <property type="match status" value="1"/>
</dbReference>
<dbReference type="HAMAP" id="MF_00112">
    <property type="entry name" value="GGGP_HepGP_synthase"/>
    <property type="match status" value="1"/>
</dbReference>
<dbReference type="InterPro" id="IPR039074">
    <property type="entry name" value="GGGP/HepGP_synthase_I"/>
</dbReference>
<dbReference type="InterPro" id="IPR038597">
    <property type="entry name" value="GGGP/HepGP_synthase_sf"/>
</dbReference>
<dbReference type="InterPro" id="IPR008205">
    <property type="entry name" value="GGGP_HepGP_synthase"/>
</dbReference>
<dbReference type="InterPro" id="IPR010946">
    <property type="entry name" value="GGGP_synth"/>
</dbReference>
<dbReference type="NCBIfam" id="TIGR01769">
    <property type="entry name" value="GGGP"/>
    <property type="match status" value="1"/>
</dbReference>
<dbReference type="NCBIfam" id="TIGR01768">
    <property type="entry name" value="GGGP-family"/>
    <property type="match status" value="1"/>
</dbReference>
<dbReference type="NCBIfam" id="NF003198">
    <property type="entry name" value="PRK04169.1-2"/>
    <property type="match status" value="1"/>
</dbReference>
<dbReference type="PANTHER" id="PTHR40029">
    <property type="match status" value="1"/>
</dbReference>
<dbReference type="PANTHER" id="PTHR40029:SF2">
    <property type="entry name" value="HEPTAPRENYLGLYCERYL PHOSPHATE SYNTHASE"/>
    <property type="match status" value="1"/>
</dbReference>
<dbReference type="Pfam" id="PF01884">
    <property type="entry name" value="PcrB"/>
    <property type="match status" value="1"/>
</dbReference>
<dbReference type="SUPFAM" id="SSF51395">
    <property type="entry name" value="FMN-linked oxidoreductases"/>
    <property type="match status" value="1"/>
</dbReference>
<proteinExistence type="inferred from homology"/>
<keyword id="KW-0963">Cytoplasm</keyword>
<keyword id="KW-0444">Lipid biosynthesis</keyword>
<keyword id="KW-0443">Lipid metabolism</keyword>
<keyword id="KW-0460">Magnesium</keyword>
<keyword id="KW-0479">Metal-binding</keyword>
<keyword id="KW-0594">Phospholipid biosynthesis</keyword>
<keyword id="KW-1208">Phospholipid metabolism</keyword>
<keyword id="KW-0808">Transferase</keyword>
<organism>
    <name type="scientific">Picrophilus torridus (strain ATCC 700027 / DSM 9790 / JCM 10055 / NBRC 100828 / KAW 2/3)</name>
    <dbReference type="NCBI Taxonomy" id="1122961"/>
    <lineage>
        <taxon>Archaea</taxon>
        <taxon>Methanobacteriati</taxon>
        <taxon>Thermoplasmatota</taxon>
        <taxon>Thermoplasmata</taxon>
        <taxon>Thermoplasmatales</taxon>
        <taxon>Picrophilaceae</taxon>
        <taxon>Picrophilus</taxon>
    </lineage>
</organism>
<reference key="1">
    <citation type="journal article" date="2004" name="Proc. Natl. Acad. Sci. U.S.A.">
        <title>Genome sequence of Picrophilus torridus and its implications for life around pH 0.</title>
        <authorList>
            <person name="Fuetterer O."/>
            <person name="Angelov A."/>
            <person name="Liesegang H."/>
            <person name="Gottschalk G."/>
            <person name="Schleper C."/>
            <person name="Schepers B."/>
            <person name="Dock C."/>
            <person name="Antranikian G."/>
            <person name="Liebl W."/>
        </authorList>
    </citation>
    <scope>NUCLEOTIDE SEQUENCE [LARGE SCALE GENOMIC DNA]</scope>
    <source>
        <strain>ATCC 700027 / DSM 9790 / JCM 10055 / NBRC 100828 / KAW 2/3</strain>
    </source>
</reference>
<evidence type="ECO:0000255" key="1">
    <source>
        <dbReference type="HAMAP-Rule" id="MF_00112"/>
    </source>
</evidence>
<accession>Q6L2N4</accession>
<name>GGGPS_PICTO</name>
<gene>
    <name type="ordered locus">PTO0183</name>
</gene>
<sequence>MTVYNDIIEKLKRKKIHMTLIDPASQDIESSGRIAEAAERAGTDFIMIGGSTRINSELMDKTIGAIKSKTSLKTIIFPGSPEMISPRADAIYYMSLMNSRNIDFIIGHQVKTSLFLRQLAIETIPMAYLIFEPGMTVGRVGEANLIKRDDSDTALLYALAAETFGMKLVYLESGSGSPTYVSENVIKKIKEYVKIPVIVGGGIRDKNAAEKLAAAGADIIVTGTIVERSRNVYEALQEIISSI</sequence>
<comment type="function">
    <text evidence="1">Prenyltransferase that catalyzes the transfer of the geranylgeranyl moiety of geranylgeranyl diphosphate (GGPP) to the C3 hydroxyl of sn-glycerol-1-phosphate (G1P). This reaction is the first ether-bond-formation step in the biosynthesis of archaeal membrane lipids.</text>
</comment>
<comment type="catalytic activity">
    <reaction evidence="1">
        <text>sn-glycerol 1-phosphate + (2E,6E,10E)-geranylgeranyl diphosphate = sn-3-O-(geranylgeranyl)glycerol 1-phosphate + diphosphate</text>
        <dbReference type="Rhea" id="RHEA:23404"/>
        <dbReference type="ChEBI" id="CHEBI:33019"/>
        <dbReference type="ChEBI" id="CHEBI:57677"/>
        <dbReference type="ChEBI" id="CHEBI:57685"/>
        <dbReference type="ChEBI" id="CHEBI:58756"/>
        <dbReference type="EC" id="2.5.1.41"/>
    </reaction>
</comment>
<comment type="cofactor">
    <cofactor evidence="1">
        <name>Mg(2+)</name>
        <dbReference type="ChEBI" id="CHEBI:18420"/>
    </cofactor>
</comment>
<comment type="pathway">
    <text evidence="1">Membrane lipid metabolism; glycerophospholipid metabolism.</text>
</comment>
<comment type="subcellular location">
    <subcellularLocation>
        <location evidence="1">Cytoplasm</location>
    </subcellularLocation>
</comment>
<comment type="similarity">
    <text evidence="1">Belongs to the GGGP/HepGP synthase family. Group II subfamily.</text>
</comment>
<protein>
    <recommendedName>
        <fullName evidence="1">Geranylgeranylglyceryl phosphate synthase</fullName>
        <shortName evidence="1">GGGP synthase</shortName>
        <shortName evidence="1">GGGPS</shortName>
        <ecNumber evidence="1">2.5.1.41</ecNumber>
    </recommendedName>
    <alternativeName>
        <fullName evidence="1">(S)-3-O-geranylgeranylglyceryl phosphate synthase</fullName>
    </alternativeName>
    <alternativeName>
        <fullName evidence="1">Phosphoglycerol geranylgeranyltransferase</fullName>
    </alternativeName>
</protein>
<feature type="chain" id="PRO_0000138737" description="Geranylgeranylglyceryl phosphate synthase">
    <location>
        <begin position="1"/>
        <end position="243"/>
    </location>
</feature>
<feature type="binding site" evidence="1">
    <location>
        <position position="22"/>
    </location>
    <ligand>
        <name>Mg(2+)</name>
        <dbReference type="ChEBI" id="CHEBI:18420"/>
    </ligand>
</feature>
<feature type="binding site" evidence="1">
    <location>
        <position position="51"/>
    </location>
    <ligand>
        <name>Mg(2+)</name>
        <dbReference type="ChEBI" id="CHEBI:18420"/>
    </ligand>
</feature>
<feature type="binding site" evidence="1">
    <location>
        <begin position="170"/>
        <end position="176"/>
    </location>
    <ligand>
        <name>sn-glycerol 1-phosphate</name>
        <dbReference type="ChEBI" id="CHEBI:57685"/>
    </ligand>
</feature>
<feature type="binding site" evidence="1">
    <location>
        <begin position="201"/>
        <end position="202"/>
    </location>
    <ligand>
        <name>sn-glycerol 1-phosphate</name>
        <dbReference type="ChEBI" id="CHEBI:57685"/>
    </ligand>
</feature>
<feature type="binding site" evidence="1">
    <location>
        <begin position="223"/>
        <end position="224"/>
    </location>
    <ligand>
        <name>sn-glycerol 1-phosphate</name>
        <dbReference type="ChEBI" id="CHEBI:57685"/>
    </ligand>
</feature>